<organism>
    <name type="scientific">Microtus cabrerae</name>
    <name type="common">Cabrera's vole</name>
    <dbReference type="NCBI Taxonomy" id="70284"/>
    <lineage>
        <taxon>Eukaryota</taxon>
        <taxon>Metazoa</taxon>
        <taxon>Chordata</taxon>
        <taxon>Craniata</taxon>
        <taxon>Vertebrata</taxon>
        <taxon>Euteleostomi</taxon>
        <taxon>Mammalia</taxon>
        <taxon>Eutheria</taxon>
        <taxon>Euarchontoglires</taxon>
        <taxon>Glires</taxon>
        <taxon>Rodentia</taxon>
        <taxon>Myomorpha</taxon>
        <taxon>Muroidea</taxon>
        <taxon>Cricetidae</taxon>
        <taxon>Arvicolinae</taxon>
        <taxon>Microtus</taxon>
    </lineage>
</organism>
<comment type="function">
    <text evidence="2">Component of the ubiquinol-cytochrome c reductase complex (complex III or cytochrome b-c1 complex) that is part of the mitochondrial respiratory chain. The b-c1 complex mediates electron transfer from ubiquinol to cytochrome c. Contributes to the generation of a proton gradient across the mitochondrial membrane that is then used for ATP synthesis.</text>
</comment>
<comment type="cofactor">
    <cofactor evidence="2">
        <name>heme b</name>
        <dbReference type="ChEBI" id="CHEBI:60344"/>
    </cofactor>
    <text evidence="2">Binds 2 heme b groups non-covalently.</text>
</comment>
<comment type="subunit">
    <text evidence="2">The cytochrome bc1 complex contains 11 subunits: 3 respiratory subunits (MT-CYB, CYC1 and UQCRFS1), 2 core proteins (UQCRC1 and UQCRC2) and 6 low-molecular weight proteins (UQCRH/QCR6, UQCRB/QCR7, UQCRQ/QCR8, UQCR10/QCR9, UQCR11/QCR10 and a cleavage product of UQCRFS1). This cytochrome bc1 complex then forms a dimer.</text>
</comment>
<comment type="subcellular location">
    <subcellularLocation>
        <location evidence="2">Mitochondrion inner membrane</location>
        <topology evidence="2">Multi-pass membrane protein</topology>
    </subcellularLocation>
</comment>
<comment type="miscellaneous">
    <text evidence="1">Heme 1 (or BL or b562) is low-potential and absorbs at about 562 nm, and heme 2 (or BH or b566) is high-potential and absorbs at about 566 nm.</text>
</comment>
<comment type="similarity">
    <text evidence="3 4">Belongs to the cytochrome b family.</text>
</comment>
<comment type="caution">
    <text evidence="2">The full-length protein contains only eight transmembrane helices, not nine as predicted by bioinformatics tools.</text>
</comment>
<dbReference type="EMBL" id="AY513788">
    <property type="protein sequence ID" value="AAS82780.1"/>
    <property type="molecule type" value="Genomic_DNA"/>
</dbReference>
<dbReference type="EMBL" id="AY513789">
    <property type="protein sequence ID" value="AAS82781.1"/>
    <property type="molecule type" value="Genomic_DNA"/>
</dbReference>
<dbReference type="SMR" id="Q6JDU8"/>
<dbReference type="GO" id="GO:0005743">
    <property type="term" value="C:mitochondrial inner membrane"/>
    <property type="evidence" value="ECO:0007669"/>
    <property type="project" value="UniProtKB-SubCell"/>
</dbReference>
<dbReference type="GO" id="GO:0045275">
    <property type="term" value="C:respiratory chain complex III"/>
    <property type="evidence" value="ECO:0007669"/>
    <property type="project" value="InterPro"/>
</dbReference>
<dbReference type="GO" id="GO:0046872">
    <property type="term" value="F:metal ion binding"/>
    <property type="evidence" value="ECO:0007669"/>
    <property type="project" value="UniProtKB-KW"/>
</dbReference>
<dbReference type="GO" id="GO:0008121">
    <property type="term" value="F:ubiquinol-cytochrome-c reductase activity"/>
    <property type="evidence" value="ECO:0007669"/>
    <property type="project" value="InterPro"/>
</dbReference>
<dbReference type="GO" id="GO:0006122">
    <property type="term" value="P:mitochondrial electron transport, ubiquinol to cytochrome c"/>
    <property type="evidence" value="ECO:0007669"/>
    <property type="project" value="TreeGrafter"/>
</dbReference>
<dbReference type="CDD" id="cd00290">
    <property type="entry name" value="cytochrome_b_C"/>
    <property type="match status" value="1"/>
</dbReference>
<dbReference type="CDD" id="cd00284">
    <property type="entry name" value="Cytochrome_b_N"/>
    <property type="match status" value="1"/>
</dbReference>
<dbReference type="FunFam" id="1.20.810.10:FF:000002">
    <property type="entry name" value="Cytochrome b"/>
    <property type="match status" value="1"/>
</dbReference>
<dbReference type="Gene3D" id="1.20.810.10">
    <property type="entry name" value="Cytochrome Bc1 Complex, Chain C"/>
    <property type="match status" value="1"/>
</dbReference>
<dbReference type="InterPro" id="IPR005798">
    <property type="entry name" value="Cyt_b/b6_C"/>
</dbReference>
<dbReference type="InterPro" id="IPR036150">
    <property type="entry name" value="Cyt_b/b6_C_sf"/>
</dbReference>
<dbReference type="InterPro" id="IPR005797">
    <property type="entry name" value="Cyt_b/b6_N"/>
</dbReference>
<dbReference type="InterPro" id="IPR027387">
    <property type="entry name" value="Cytb/b6-like_sf"/>
</dbReference>
<dbReference type="InterPro" id="IPR030689">
    <property type="entry name" value="Cytochrome_b"/>
</dbReference>
<dbReference type="InterPro" id="IPR048260">
    <property type="entry name" value="Cytochrome_b_C_euk/bac"/>
</dbReference>
<dbReference type="InterPro" id="IPR048259">
    <property type="entry name" value="Cytochrome_b_N_euk/bac"/>
</dbReference>
<dbReference type="InterPro" id="IPR016174">
    <property type="entry name" value="Di-haem_cyt_TM"/>
</dbReference>
<dbReference type="PANTHER" id="PTHR19271">
    <property type="entry name" value="CYTOCHROME B"/>
    <property type="match status" value="1"/>
</dbReference>
<dbReference type="PANTHER" id="PTHR19271:SF16">
    <property type="entry name" value="CYTOCHROME B"/>
    <property type="match status" value="1"/>
</dbReference>
<dbReference type="Pfam" id="PF00032">
    <property type="entry name" value="Cytochrom_B_C"/>
    <property type="match status" value="1"/>
</dbReference>
<dbReference type="Pfam" id="PF00033">
    <property type="entry name" value="Cytochrome_B"/>
    <property type="match status" value="1"/>
</dbReference>
<dbReference type="PIRSF" id="PIRSF038885">
    <property type="entry name" value="COB"/>
    <property type="match status" value="1"/>
</dbReference>
<dbReference type="SUPFAM" id="SSF81648">
    <property type="entry name" value="a domain/subunit of cytochrome bc1 complex (Ubiquinol-cytochrome c reductase)"/>
    <property type="match status" value="1"/>
</dbReference>
<dbReference type="SUPFAM" id="SSF81342">
    <property type="entry name" value="Transmembrane di-heme cytochromes"/>
    <property type="match status" value="1"/>
</dbReference>
<dbReference type="PROSITE" id="PS51003">
    <property type="entry name" value="CYTB_CTER"/>
    <property type="match status" value="1"/>
</dbReference>
<dbReference type="PROSITE" id="PS51002">
    <property type="entry name" value="CYTB_NTER"/>
    <property type="match status" value="1"/>
</dbReference>
<protein>
    <recommendedName>
        <fullName>Cytochrome b</fullName>
    </recommendedName>
    <alternativeName>
        <fullName>Complex III subunit 3</fullName>
    </alternativeName>
    <alternativeName>
        <fullName>Complex III subunit III</fullName>
    </alternativeName>
    <alternativeName>
        <fullName>Cytochrome b-c1 complex subunit 3</fullName>
    </alternativeName>
    <alternativeName>
        <fullName>Ubiquinol-cytochrome-c reductase complex cytochrome b subunit</fullName>
    </alternativeName>
</protein>
<sequence>MTIIRKKHPLIKIINHSFIDLPAPSNISSWWNFGSLLGLCLIIQILTGLFLAMHYTSDTATAFSSVAHICRDVNYGWLIRYMHANGASMFFICLFLHVGRGIYYGSYNMMETWNMGIILLFAVMATAFMGYVLPWGQMSFWGATVITNLLSAIPYIGTTLVEWIWGGFSVDKATLTRFFAFHFILPFIITALVLVHLLFLHETGSNNPAGLNSDADKIPFHPYYTVKDFLGVLILLMAFMILTLFFPDALGDPDNYTPANPLNTPPHIKPEWYFLFAYAILRSIPNKLGGVLALILSILILAAMPYLHTSKQRTLTFRPITQSIYWILVADLLILTWIGGQPVEHPFIIIGQTASIAYFTIIIILMPISGMIENNILDLD</sequence>
<gene>
    <name type="primary">MT-CYB</name>
    <name type="synonym">COB</name>
    <name type="synonym">CYTB</name>
    <name type="synonym">MTCYB</name>
</gene>
<keyword id="KW-0249">Electron transport</keyword>
<keyword id="KW-0349">Heme</keyword>
<keyword id="KW-0408">Iron</keyword>
<keyword id="KW-0472">Membrane</keyword>
<keyword id="KW-0479">Metal-binding</keyword>
<keyword id="KW-0496">Mitochondrion</keyword>
<keyword id="KW-0999">Mitochondrion inner membrane</keyword>
<keyword id="KW-0679">Respiratory chain</keyword>
<keyword id="KW-0812">Transmembrane</keyword>
<keyword id="KW-1133">Transmembrane helix</keyword>
<keyword id="KW-0813">Transport</keyword>
<keyword id="KW-0830">Ubiquinone</keyword>
<name>CYB_MICCB</name>
<evidence type="ECO:0000250" key="1"/>
<evidence type="ECO:0000250" key="2">
    <source>
        <dbReference type="UniProtKB" id="P00157"/>
    </source>
</evidence>
<evidence type="ECO:0000255" key="3">
    <source>
        <dbReference type="PROSITE-ProRule" id="PRU00967"/>
    </source>
</evidence>
<evidence type="ECO:0000255" key="4">
    <source>
        <dbReference type="PROSITE-ProRule" id="PRU00968"/>
    </source>
</evidence>
<geneLocation type="mitochondrion"/>
<accession>Q6JDU8</accession>
<accession>Q6JDU7</accession>
<proteinExistence type="inferred from homology"/>
<reference key="1">
    <citation type="journal article" date="2004" name="Mol. Phylogenet. Evol.">
        <title>Molecular phylogeny of the speciose vole genus Microtus (Arvicolinae, Rodentia) inferred from mitochondrial DNA sequences.</title>
        <authorList>
            <person name="Jaarola M."/>
            <person name="Martinkova N."/>
            <person name="Gunduz I."/>
            <person name="Brunhoff C."/>
            <person name="Zima J."/>
            <person name="Nadachowski A."/>
            <person name="Amori G."/>
            <person name="Bulatova N.S."/>
            <person name="Chondropoulos B."/>
            <person name="Fraguedakis-Tsolis S."/>
            <person name="Gonzalez-Esteban J."/>
            <person name="Lopez-Fuster M.J."/>
            <person name="Kandaurov A.S."/>
            <person name="Kefelioglu H."/>
            <person name="Mathias M.L."/>
            <person name="Villate I."/>
            <person name="Searle J.B."/>
        </authorList>
    </citation>
    <scope>NUCLEOTIDE SEQUENCE [GENOMIC DNA]</scope>
    <source>
        <strain>Isolate 1</strain>
        <strain>Isolate 2</strain>
    </source>
</reference>
<feature type="chain" id="PRO_0000255073" description="Cytochrome b">
    <location>
        <begin position="1"/>
        <end position="380"/>
    </location>
</feature>
<feature type="transmembrane region" description="Helical" evidence="2">
    <location>
        <begin position="33"/>
        <end position="53"/>
    </location>
</feature>
<feature type="transmembrane region" description="Helical" evidence="2">
    <location>
        <begin position="77"/>
        <end position="98"/>
    </location>
</feature>
<feature type="transmembrane region" description="Helical" evidence="2">
    <location>
        <begin position="113"/>
        <end position="133"/>
    </location>
</feature>
<feature type="transmembrane region" description="Helical" evidence="2">
    <location>
        <begin position="178"/>
        <end position="198"/>
    </location>
</feature>
<feature type="transmembrane region" description="Helical" evidence="2">
    <location>
        <begin position="226"/>
        <end position="246"/>
    </location>
</feature>
<feature type="transmembrane region" description="Helical" evidence="2">
    <location>
        <begin position="288"/>
        <end position="308"/>
    </location>
</feature>
<feature type="transmembrane region" description="Helical" evidence="2">
    <location>
        <begin position="320"/>
        <end position="340"/>
    </location>
</feature>
<feature type="transmembrane region" description="Helical" evidence="2">
    <location>
        <begin position="347"/>
        <end position="367"/>
    </location>
</feature>
<feature type="binding site" description="axial binding residue" evidence="2">
    <location>
        <position position="83"/>
    </location>
    <ligand>
        <name>heme b</name>
        <dbReference type="ChEBI" id="CHEBI:60344"/>
        <label>b562</label>
    </ligand>
    <ligandPart>
        <name>Fe</name>
        <dbReference type="ChEBI" id="CHEBI:18248"/>
    </ligandPart>
</feature>
<feature type="binding site" description="axial binding residue" evidence="2">
    <location>
        <position position="97"/>
    </location>
    <ligand>
        <name>heme b</name>
        <dbReference type="ChEBI" id="CHEBI:60344"/>
        <label>b566</label>
    </ligand>
    <ligandPart>
        <name>Fe</name>
        <dbReference type="ChEBI" id="CHEBI:18248"/>
    </ligandPart>
</feature>
<feature type="binding site" description="axial binding residue" evidence="2">
    <location>
        <position position="182"/>
    </location>
    <ligand>
        <name>heme b</name>
        <dbReference type="ChEBI" id="CHEBI:60344"/>
        <label>b562</label>
    </ligand>
    <ligandPart>
        <name>Fe</name>
        <dbReference type="ChEBI" id="CHEBI:18248"/>
    </ligandPart>
</feature>
<feature type="binding site" description="axial binding residue" evidence="2">
    <location>
        <position position="196"/>
    </location>
    <ligand>
        <name>heme b</name>
        <dbReference type="ChEBI" id="CHEBI:60344"/>
        <label>b566</label>
    </ligand>
    <ligandPart>
        <name>Fe</name>
        <dbReference type="ChEBI" id="CHEBI:18248"/>
    </ligandPart>
</feature>
<feature type="binding site" evidence="2">
    <location>
        <position position="201"/>
    </location>
    <ligand>
        <name>a ubiquinone</name>
        <dbReference type="ChEBI" id="CHEBI:16389"/>
    </ligand>
</feature>
<feature type="sequence variant" description="In strain: Isolate 2.">
    <original>M</original>
    <variation>V</variation>
    <location>
        <position position="110"/>
    </location>
</feature>